<comment type="function">
    <text>This is one of the five types (D1 to D5) of receptors for dopamine. The activity of this receptor is mediated by G proteins which activate adenylyl cyclase.</text>
</comment>
<comment type="subcellular location">
    <subcellularLocation>
        <location>Cell membrane</location>
        <topology>Multi-pass membrane protein</topology>
    </subcellularLocation>
    <subcellularLocation>
        <location evidence="2">Cell projection</location>
        <location evidence="2">Cilium membrane</location>
        <topology evidence="3">Multi-pass membrane protein</topology>
    </subcellularLocation>
</comment>
<comment type="tissue specificity">
    <text>Brain and kidney.</text>
</comment>
<comment type="similarity">
    <text evidence="4">Belongs to the G-protein coupled receptor 1 family.</text>
</comment>
<name>DRD1C_XENLA</name>
<dbReference type="EMBL" id="U07865">
    <property type="protein sequence ID" value="AAA50830.1"/>
    <property type="molecule type" value="Genomic_DNA"/>
</dbReference>
<dbReference type="PIR" id="I51661">
    <property type="entry name" value="I51661"/>
</dbReference>
<dbReference type="SMR" id="P42291"/>
<dbReference type="GlyCosmos" id="P42291">
    <property type="glycosylation" value="2 sites, No reported glycans"/>
</dbReference>
<dbReference type="AGR" id="Xenbase:XB-GENE-6500258"/>
<dbReference type="Xenbase" id="XB-GENE-6500258">
    <property type="gene designation" value="drd1c.S"/>
</dbReference>
<dbReference type="Proteomes" id="UP000186698">
    <property type="component" value="Unplaced"/>
</dbReference>
<dbReference type="GO" id="GO:0060170">
    <property type="term" value="C:ciliary membrane"/>
    <property type="evidence" value="ECO:0007669"/>
    <property type="project" value="UniProtKB-SubCell"/>
</dbReference>
<dbReference type="GO" id="GO:0005886">
    <property type="term" value="C:plasma membrane"/>
    <property type="evidence" value="ECO:0000318"/>
    <property type="project" value="GO_Central"/>
</dbReference>
<dbReference type="GO" id="GO:0004930">
    <property type="term" value="F:G protein-coupled receptor activity"/>
    <property type="evidence" value="ECO:0000318"/>
    <property type="project" value="GO_Central"/>
</dbReference>
<dbReference type="GO" id="GO:0071880">
    <property type="term" value="P:adenylate cyclase-activating adrenergic receptor signaling pathway"/>
    <property type="evidence" value="ECO:0000318"/>
    <property type="project" value="GO_Central"/>
</dbReference>
<dbReference type="GO" id="GO:0043410">
    <property type="term" value="P:positive regulation of MAPK cascade"/>
    <property type="evidence" value="ECO:0000318"/>
    <property type="project" value="GO_Central"/>
</dbReference>
<dbReference type="CDD" id="cd15057">
    <property type="entry name" value="7tmA_D1-like_dopamine_R"/>
    <property type="match status" value="1"/>
</dbReference>
<dbReference type="FunFam" id="1.20.1070.10:FF:000045">
    <property type="entry name" value="D(1A) dopamine receptor"/>
    <property type="match status" value="1"/>
</dbReference>
<dbReference type="Gene3D" id="1.20.1070.10">
    <property type="entry name" value="Rhodopsin 7-helix transmembrane proteins"/>
    <property type="match status" value="1"/>
</dbReference>
<dbReference type="InterPro" id="IPR000929">
    <property type="entry name" value="Dopamine_rcpt"/>
</dbReference>
<dbReference type="InterPro" id="IPR000276">
    <property type="entry name" value="GPCR_Rhodpsn"/>
</dbReference>
<dbReference type="InterPro" id="IPR017452">
    <property type="entry name" value="GPCR_Rhodpsn_7TM"/>
</dbReference>
<dbReference type="PANTHER" id="PTHR24248">
    <property type="entry name" value="ADRENERGIC RECEPTOR-RELATED G-PROTEIN COUPLED RECEPTOR"/>
    <property type="match status" value="1"/>
</dbReference>
<dbReference type="PANTHER" id="PTHR24248:SF123">
    <property type="entry name" value="G-PROTEIN COUPLED RECEPTORS FAMILY 1 PROFILE DOMAIN-CONTAINING PROTEIN"/>
    <property type="match status" value="1"/>
</dbReference>
<dbReference type="Pfam" id="PF00001">
    <property type="entry name" value="7tm_1"/>
    <property type="match status" value="1"/>
</dbReference>
<dbReference type="PRINTS" id="PR00242">
    <property type="entry name" value="DOPAMINER"/>
</dbReference>
<dbReference type="PRINTS" id="PR00237">
    <property type="entry name" value="GPCRRHODOPSN"/>
</dbReference>
<dbReference type="SMART" id="SM01381">
    <property type="entry name" value="7TM_GPCR_Srsx"/>
    <property type="match status" value="1"/>
</dbReference>
<dbReference type="SUPFAM" id="SSF81321">
    <property type="entry name" value="Family A G protein-coupled receptor-like"/>
    <property type="match status" value="1"/>
</dbReference>
<dbReference type="PROSITE" id="PS00237">
    <property type="entry name" value="G_PROTEIN_RECEP_F1_1"/>
    <property type="match status" value="1"/>
</dbReference>
<dbReference type="PROSITE" id="PS50262">
    <property type="entry name" value="G_PROTEIN_RECEP_F1_2"/>
    <property type="match status" value="1"/>
</dbReference>
<feature type="chain" id="PRO_0000069381" description="D(1C) dopamine receptor">
    <location>
        <begin position="1"/>
        <end position="465"/>
    </location>
</feature>
<feature type="topological domain" description="Extracellular" evidence="3">
    <location>
        <begin position="1"/>
        <end position="30"/>
    </location>
</feature>
<feature type="transmembrane region" description="Helical; Name=1" evidence="3">
    <location>
        <begin position="31"/>
        <end position="54"/>
    </location>
</feature>
<feature type="topological domain" description="Cytoplasmic" evidence="3">
    <location>
        <begin position="55"/>
        <end position="65"/>
    </location>
</feature>
<feature type="transmembrane region" description="Helical; Name=2" evidence="3">
    <location>
        <begin position="66"/>
        <end position="92"/>
    </location>
</feature>
<feature type="topological domain" description="Extracellular" evidence="3">
    <location>
        <begin position="93"/>
        <end position="101"/>
    </location>
</feature>
<feature type="transmembrane region" description="Helical; Name=3" evidence="3">
    <location>
        <begin position="102"/>
        <end position="124"/>
    </location>
</feature>
<feature type="topological domain" description="Cytoplasmic" evidence="3">
    <location>
        <begin position="125"/>
        <end position="143"/>
    </location>
</feature>
<feature type="transmembrane region" description="Helical; Name=4" evidence="3">
    <location>
        <begin position="144"/>
        <end position="168"/>
    </location>
</feature>
<feature type="topological domain" description="Extracellular" evidence="3">
    <location>
        <begin position="169"/>
        <end position="193"/>
    </location>
</feature>
<feature type="transmembrane region" description="Helical; Name=5" evidence="3">
    <location>
        <begin position="194"/>
        <end position="219"/>
    </location>
</feature>
<feature type="topological domain" description="Cytoplasmic" evidence="3">
    <location>
        <begin position="220"/>
        <end position="264"/>
    </location>
</feature>
<feature type="transmembrane region" description="Helical; Name=6" evidence="3">
    <location>
        <begin position="265"/>
        <end position="291"/>
    </location>
</feature>
<feature type="topological domain" description="Extracellular" evidence="3">
    <location>
        <begin position="292"/>
        <end position="309"/>
    </location>
</feature>
<feature type="transmembrane region" description="Helical; Name=7" evidence="3">
    <location>
        <begin position="310"/>
        <end position="334"/>
    </location>
</feature>
<feature type="topological domain" description="Cytoplasmic" evidence="3">
    <location>
        <begin position="335"/>
        <end position="465"/>
    </location>
</feature>
<feature type="lipid moiety-binding region" description="S-palmitoyl cysteine" evidence="1">
    <location>
        <position position="344"/>
    </location>
</feature>
<feature type="glycosylation site" description="N-linked (GlcNAc...) asparagine" evidence="3">
    <location>
        <position position="3"/>
    </location>
</feature>
<feature type="glycosylation site" description="N-linked (GlcNAc...) asparagine" evidence="3">
    <location>
        <position position="8"/>
    </location>
</feature>
<feature type="disulfide bond" evidence="4">
    <location>
        <begin position="101"/>
        <end position="187"/>
    </location>
</feature>
<proteinExistence type="evidence at transcript level"/>
<organism>
    <name type="scientific">Xenopus laevis</name>
    <name type="common">African clawed frog</name>
    <dbReference type="NCBI Taxonomy" id="8355"/>
    <lineage>
        <taxon>Eukaryota</taxon>
        <taxon>Metazoa</taxon>
        <taxon>Chordata</taxon>
        <taxon>Craniata</taxon>
        <taxon>Vertebrata</taxon>
        <taxon>Euteleostomi</taxon>
        <taxon>Amphibia</taxon>
        <taxon>Batrachia</taxon>
        <taxon>Anura</taxon>
        <taxon>Pipoidea</taxon>
        <taxon>Pipidae</taxon>
        <taxon>Xenopodinae</taxon>
        <taxon>Xenopus</taxon>
        <taxon>Xenopus</taxon>
    </lineage>
</organism>
<gene>
    <name type="primary">drd1c</name>
</gene>
<keyword id="KW-1003">Cell membrane</keyword>
<keyword id="KW-0966">Cell projection</keyword>
<keyword id="KW-1015">Disulfide bond</keyword>
<keyword id="KW-0297">G-protein coupled receptor</keyword>
<keyword id="KW-0325">Glycoprotein</keyword>
<keyword id="KW-0449">Lipoprotein</keyword>
<keyword id="KW-0472">Membrane</keyword>
<keyword id="KW-0564">Palmitate</keyword>
<keyword id="KW-0675">Receptor</keyword>
<keyword id="KW-1185">Reference proteome</keyword>
<keyword id="KW-0807">Transducer</keyword>
<keyword id="KW-0812">Transmembrane</keyword>
<keyword id="KW-1133">Transmembrane helix</keyword>
<evidence type="ECO:0000250" key="1"/>
<evidence type="ECO:0000250" key="2">
    <source>
        <dbReference type="UniProtKB" id="P21728"/>
    </source>
</evidence>
<evidence type="ECO:0000255" key="3"/>
<evidence type="ECO:0000255" key="4">
    <source>
        <dbReference type="PROSITE-ProRule" id="PRU00521"/>
    </source>
</evidence>
<protein>
    <recommendedName>
        <fullName>D(1C) dopamine receptor</fullName>
    </recommendedName>
</protein>
<sequence>MENFSIFNVTVNVWHADLDVGNSDLSLRALTGLLLSLLILSTLLGNTLVCLAVIKFRHLRSKVTNFFVISLAVSDLFVALLVMPWKAVTEVAGFWVFGDFCDTWVAFDIMCSTASILNLCIISLDRYWAIASPFRYERKMTQRVAFIMIGVAWTLSILISFIPVQLSWHKSHEADEELNGVNHTENCDSSLNRTYAISSSLISFYIPVVIMIGTYTRIYRIAQTQIRRISSLERAVEHAQRCSSRLSNENSLKTSFRKETKVLKTLSIIMGVFVFCWLPFFVLNCMIPFCHMNLPGQNEPEPPCVSETTFNIFVWFGWANSSLNPVIYAFNADFRKAFTTILGCNRFCSSNNVEAVNFSNELVSYHHDTTFQKDIPVTFNNSHLPNVVDQDQEVLEGTCFDKVSVLSTSHGTRSQKNLHLPAGVQFECEAEITLETITPFTSTGPLECLPQLVADEDRHYTTKLY</sequence>
<accession>P42291</accession>
<reference key="1">
    <citation type="journal article" date="1994" name="Proc. Natl. Acad. Sci. U.S.A.">
        <title>D1A, D1B, and D1C dopamine receptors from Xenopus laevis.</title>
        <authorList>
            <person name="Sugamori K.S."/>
            <person name="Demchyshyn L.L."/>
            <person name="Chung M."/>
            <person name="Niznik H.B."/>
        </authorList>
    </citation>
    <scope>NUCLEOTIDE SEQUENCE [GENOMIC DNA]</scope>
</reference>